<comment type="function">
    <text evidence="1">NDH-1 shuttles electrons from NADH, via FMN and iron-sulfur (Fe-S) centers, to quinones in the respiratory chain. The immediate electron acceptor for the enzyme in this species is believed to be ubiquinone. Couples the redox reaction to proton translocation (for every two electrons transferred, four hydrogen ions are translocated across the cytoplasmic membrane), and thus conserves the redox energy in a proton gradient. This subunit may bind ubiquinone.</text>
</comment>
<comment type="catalytic activity">
    <reaction evidence="1">
        <text>a quinone + NADH + 5 H(+)(in) = a quinol + NAD(+) + 4 H(+)(out)</text>
        <dbReference type="Rhea" id="RHEA:57888"/>
        <dbReference type="ChEBI" id="CHEBI:15378"/>
        <dbReference type="ChEBI" id="CHEBI:24646"/>
        <dbReference type="ChEBI" id="CHEBI:57540"/>
        <dbReference type="ChEBI" id="CHEBI:57945"/>
        <dbReference type="ChEBI" id="CHEBI:132124"/>
    </reaction>
</comment>
<comment type="subunit">
    <text evidence="1">NDH-1 is composed of 14 different subunits. Subunits NuoA, H, J, K, L, M, N constitute the membrane sector of the complex.</text>
</comment>
<comment type="subcellular location">
    <subcellularLocation>
        <location evidence="1">Cell inner membrane</location>
        <topology evidence="1">Multi-pass membrane protein</topology>
    </subcellularLocation>
</comment>
<comment type="similarity">
    <text evidence="1">Belongs to the complex I subunit 1 family.</text>
</comment>
<dbReference type="EC" id="7.1.1.-" evidence="1"/>
<dbReference type="EMBL" id="CR925677">
    <property type="protein sequence ID" value="CAI27893.1"/>
    <property type="molecule type" value="Genomic_DNA"/>
</dbReference>
<dbReference type="RefSeq" id="WP_011155112.1">
    <property type="nucleotide sequence ID" value="NC_006831.1"/>
</dbReference>
<dbReference type="SMR" id="Q5FGW5"/>
<dbReference type="GeneID" id="33058021"/>
<dbReference type="KEGG" id="erg:ERGA_CDS_04410"/>
<dbReference type="HOGENOM" id="CLU_015134_0_1_5"/>
<dbReference type="OrthoDB" id="9803734at2"/>
<dbReference type="Proteomes" id="UP000000533">
    <property type="component" value="Chromosome"/>
</dbReference>
<dbReference type="GO" id="GO:0005886">
    <property type="term" value="C:plasma membrane"/>
    <property type="evidence" value="ECO:0007669"/>
    <property type="project" value="UniProtKB-SubCell"/>
</dbReference>
<dbReference type="GO" id="GO:0003954">
    <property type="term" value="F:NADH dehydrogenase activity"/>
    <property type="evidence" value="ECO:0007669"/>
    <property type="project" value="TreeGrafter"/>
</dbReference>
<dbReference type="GO" id="GO:0016655">
    <property type="term" value="F:oxidoreductase activity, acting on NAD(P)H, quinone or similar compound as acceptor"/>
    <property type="evidence" value="ECO:0007669"/>
    <property type="project" value="UniProtKB-UniRule"/>
</dbReference>
<dbReference type="GO" id="GO:0048038">
    <property type="term" value="F:quinone binding"/>
    <property type="evidence" value="ECO:0007669"/>
    <property type="project" value="UniProtKB-KW"/>
</dbReference>
<dbReference type="GO" id="GO:0009060">
    <property type="term" value="P:aerobic respiration"/>
    <property type="evidence" value="ECO:0007669"/>
    <property type="project" value="TreeGrafter"/>
</dbReference>
<dbReference type="HAMAP" id="MF_01350">
    <property type="entry name" value="NDH1_NuoH"/>
    <property type="match status" value="1"/>
</dbReference>
<dbReference type="InterPro" id="IPR001694">
    <property type="entry name" value="NADH_UbQ_OxRdtase_su1/FPO"/>
</dbReference>
<dbReference type="InterPro" id="IPR018086">
    <property type="entry name" value="NADH_UbQ_OxRdtase_su1_CS"/>
</dbReference>
<dbReference type="NCBIfam" id="NF004741">
    <property type="entry name" value="PRK06076.1-2"/>
    <property type="match status" value="1"/>
</dbReference>
<dbReference type="NCBIfam" id="NF004745">
    <property type="entry name" value="PRK06076.1-6"/>
    <property type="match status" value="1"/>
</dbReference>
<dbReference type="PANTHER" id="PTHR11432">
    <property type="entry name" value="NADH DEHYDROGENASE SUBUNIT 1"/>
    <property type="match status" value="1"/>
</dbReference>
<dbReference type="PANTHER" id="PTHR11432:SF3">
    <property type="entry name" value="NADH-UBIQUINONE OXIDOREDUCTASE CHAIN 1"/>
    <property type="match status" value="1"/>
</dbReference>
<dbReference type="Pfam" id="PF00146">
    <property type="entry name" value="NADHdh"/>
    <property type="match status" value="1"/>
</dbReference>
<dbReference type="PROSITE" id="PS00667">
    <property type="entry name" value="COMPLEX1_ND1_1"/>
    <property type="match status" value="1"/>
</dbReference>
<dbReference type="PROSITE" id="PS00668">
    <property type="entry name" value="COMPLEX1_ND1_2"/>
    <property type="match status" value="1"/>
</dbReference>
<protein>
    <recommendedName>
        <fullName evidence="1">NADH-quinone oxidoreductase subunit H</fullName>
        <ecNumber evidence="1">7.1.1.-</ecNumber>
    </recommendedName>
    <alternativeName>
        <fullName evidence="1">NADH dehydrogenase I subunit H</fullName>
    </alternativeName>
    <alternativeName>
        <fullName evidence="1">NDH-1 subunit H</fullName>
    </alternativeName>
</protein>
<sequence length="367" mass="41327">MHNYNIFLSFYNYISSGVLLFLKIIIVIISVMVSVAYLVYMERKVIAAIQLRQGPSVVGPFGLLQPFADAIKLIIKEPIIPFKANKLCFLIAPVITFTLALLGWAVIPFGSYIIVDNGQELIVPNVIANINIGVLYILAISSLGVYGIIIAGWSSNSNYAFLGAIRSASQMISYEVSIGLTIVTVLLATGSLKLGEIVIARHNMPYWIDLLLLPMAFMFFISALAETNRHPFDLPEAESELVSGYNVEYSSMPFALFFLGEYANMILMSAMAVIFFFGGWYPPLNVSFLYIIPGTIWFIFKIVILLFCFIWIRASIPRYRYDQLMRLGWKVFLPISLFWVILVSGILVYTDSLPKNTLNNTVYYKEN</sequence>
<keyword id="KW-0997">Cell inner membrane</keyword>
<keyword id="KW-1003">Cell membrane</keyword>
<keyword id="KW-0472">Membrane</keyword>
<keyword id="KW-0520">NAD</keyword>
<keyword id="KW-0874">Quinone</keyword>
<keyword id="KW-1278">Translocase</keyword>
<keyword id="KW-0812">Transmembrane</keyword>
<keyword id="KW-1133">Transmembrane helix</keyword>
<keyword id="KW-0830">Ubiquinone</keyword>
<feature type="chain" id="PRO_0000244915" description="NADH-quinone oxidoreductase subunit H">
    <location>
        <begin position="1"/>
        <end position="367"/>
    </location>
</feature>
<feature type="transmembrane region" description="Helical" evidence="1">
    <location>
        <begin position="18"/>
        <end position="38"/>
    </location>
</feature>
<feature type="transmembrane region" description="Helical" evidence="1">
    <location>
        <begin position="87"/>
        <end position="107"/>
    </location>
</feature>
<feature type="transmembrane region" description="Helical" evidence="1">
    <location>
        <begin position="132"/>
        <end position="152"/>
    </location>
</feature>
<feature type="transmembrane region" description="Helical" evidence="1">
    <location>
        <begin position="180"/>
        <end position="200"/>
    </location>
</feature>
<feature type="transmembrane region" description="Helical" evidence="1">
    <location>
        <begin position="204"/>
        <end position="224"/>
    </location>
</feature>
<feature type="transmembrane region" description="Helical" evidence="1">
    <location>
        <begin position="257"/>
        <end position="277"/>
    </location>
</feature>
<feature type="transmembrane region" description="Helical" evidence="1">
    <location>
        <begin position="291"/>
        <end position="311"/>
    </location>
</feature>
<feature type="transmembrane region" description="Helical" evidence="1">
    <location>
        <begin position="328"/>
        <end position="348"/>
    </location>
</feature>
<gene>
    <name evidence="1" type="primary">nuoH</name>
    <name type="ordered locus">ERGA_CDS_04410</name>
</gene>
<evidence type="ECO:0000255" key="1">
    <source>
        <dbReference type="HAMAP-Rule" id="MF_01350"/>
    </source>
</evidence>
<organism>
    <name type="scientific">Ehrlichia ruminantium (strain Gardel)</name>
    <dbReference type="NCBI Taxonomy" id="302409"/>
    <lineage>
        <taxon>Bacteria</taxon>
        <taxon>Pseudomonadati</taxon>
        <taxon>Pseudomonadota</taxon>
        <taxon>Alphaproteobacteria</taxon>
        <taxon>Rickettsiales</taxon>
        <taxon>Anaplasmataceae</taxon>
        <taxon>Ehrlichia</taxon>
    </lineage>
</organism>
<reference key="1">
    <citation type="journal article" date="2006" name="J. Bacteriol.">
        <title>Comparative genomic analysis of three strains of Ehrlichia ruminantium reveals an active process of genome size plasticity.</title>
        <authorList>
            <person name="Frutos R."/>
            <person name="Viari A."/>
            <person name="Ferraz C."/>
            <person name="Morgat A."/>
            <person name="Eychenie S."/>
            <person name="Kandassamy Y."/>
            <person name="Chantal I."/>
            <person name="Bensaid A."/>
            <person name="Coissac E."/>
            <person name="Vachiery N."/>
            <person name="Demaille J."/>
            <person name="Martinez D."/>
        </authorList>
    </citation>
    <scope>NUCLEOTIDE SEQUENCE [LARGE SCALE GENOMIC DNA]</scope>
    <source>
        <strain>Gardel</strain>
    </source>
</reference>
<name>NUOH_EHRRG</name>
<proteinExistence type="inferred from homology"/>
<accession>Q5FGW5</accession>